<reference key="1">
    <citation type="journal article" date="1997" name="Zool. Sci.">
        <title>Molecular phylogeny from nucleotide sequences of the mitochondrial cytochrome b gene and evolutionary history of Eurasian soricine shrews (Mammalia, Insectivora).</title>
        <authorList>
            <person name="Ohdachi S."/>
            <person name="Masuda R."/>
            <person name="Abe H."/>
            <person name="Adachi J."/>
            <person name="Dokuchaev N.E."/>
            <person name="Haukisalmi V."/>
            <person name="Yoshida M.C."/>
        </authorList>
    </citation>
    <scope>NUCLEOTIDE SEQUENCE [GENOMIC DNA] OF 1-134</scope>
    <source>
        <strain>Isolate #1210</strain>
        <strain>Isolate #5800</strain>
        <tissue>Hindfoot</tissue>
    </source>
</reference>
<reference key="2">
    <citation type="journal article" date="1999" name="Mol. Phylogenet. Evol.">
        <title>Molecular phylogeny and evolution of Sorex shrews (Soricidae: Insectivora) inferred from mitochondrial DNA sequence data.</title>
        <authorList>
            <person name="Fumagalli L."/>
            <person name="Taberlet P."/>
            <person name="Stewart D.T."/>
            <person name="Gielly L."/>
            <person name="Hausser J."/>
            <person name="Vogel P."/>
        </authorList>
    </citation>
    <scope>NUCLEOTIDE SEQUENCE [GENOMIC DNA] OF 44-379</scope>
</reference>
<organism>
    <name type="scientific">Sorex shinto</name>
    <name type="common">Shinto shrew</name>
    <dbReference type="NCBI Taxonomy" id="62286"/>
    <lineage>
        <taxon>Eukaryota</taxon>
        <taxon>Metazoa</taxon>
        <taxon>Chordata</taxon>
        <taxon>Craniata</taxon>
        <taxon>Vertebrata</taxon>
        <taxon>Euteleostomi</taxon>
        <taxon>Mammalia</taxon>
        <taxon>Eutheria</taxon>
        <taxon>Laurasiatheria</taxon>
        <taxon>Eulipotyphla</taxon>
        <taxon>Soricidae</taxon>
        <taxon>Soricinae</taxon>
        <taxon>Sorex</taxon>
    </lineage>
</organism>
<proteinExistence type="inferred from homology"/>
<comment type="function">
    <text evidence="2">Component of the ubiquinol-cytochrome c reductase complex (complex III or cytochrome b-c1 complex) that is part of the mitochondrial respiratory chain. The b-c1 complex mediates electron transfer from ubiquinol to cytochrome c. Contributes to the generation of a proton gradient across the mitochondrial membrane that is then used for ATP synthesis.</text>
</comment>
<comment type="cofactor">
    <cofactor evidence="2">
        <name>heme b</name>
        <dbReference type="ChEBI" id="CHEBI:60344"/>
    </cofactor>
    <text evidence="2">Binds 2 heme b groups non-covalently.</text>
</comment>
<comment type="subunit">
    <text evidence="2">The cytochrome bc1 complex contains 11 subunits: 3 respiratory subunits (MT-CYB, CYC1 and UQCRFS1), 2 core proteins (UQCRC1 and UQCRC2) and 6 low-molecular weight proteins (UQCRH/QCR6, UQCRB/QCR7, UQCRQ/QCR8, UQCR10/QCR9, UQCR11/QCR10 and a cleavage product of UQCRFS1). This cytochrome bc1 complex then forms a dimer.</text>
</comment>
<comment type="subcellular location">
    <subcellularLocation>
        <location evidence="2">Mitochondrion inner membrane</location>
        <topology evidence="2">Multi-pass membrane protein</topology>
    </subcellularLocation>
</comment>
<comment type="miscellaneous">
    <text evidence="1">Heme 1 (or BL or b562) is low-potential and absorbs at about 562 nm, and heme 2 (or BH or b566) is high-potential and absorbs at about 566 nm.</text>
</comment>
<comment type="similarity">
    <text evidence="3 4">Belongs to the cytochrome b family.</text>
</comment>
<comment type="caution">
    <text evidence="2">The full-length protein contains only eight transmembrane helices, not nine as predicted by bioinformatics tools.</text>
</comment>
<keyword id="KW-0249">Electron transport</keyword>
<keyword id="KW-0349">Heme</keyword>
<keyword id="KW-0408">Iron</keyword>
<keyword id="KW-0472">Membrane</keyword>
<keyword id="KW-0479">Metal-binding</keyword>
<keyword id="KW-0496">Mitochondrion</keyword>
<keyword id="KW-0999">Mitochondrion inner membrane</keyword>
<keyword id="KW-0679">Respiratory chain</keyword>
<keyword id="KW-0812">Transmembrane</keyword>
<keyword id="KW-1133">Transmembrane helix</keyword>
<keyword id="KW-0813">Transport</keyword>
<keyword id="KW-0830">Ubiquinone</keyword>
<protein>
    <recommendedName>
        <fullName>Cytochrome b</fullName>
    </recommendedName>
    <alternativeName>
        <fullName>Complex III subunit 3</fullName>
    </alternativeName>
    <alternativeName>
        <fullName>Complex III subunit III</fullName>
    </alternativeName>
    <alternativeName>
        <fullName>Cytochrome b-c1 complex subunit 3</fullName>
    </alternativeName>
    <alternativeName>
        <fullName>Ubiquinol-cytochrome-c reductase complex cytochrome b subunit</fullName>
    </alternativeName>
</protein>
<feature type="chain" id="PRO_0000061580" description="Cytochrome b">
    <location>
        <begin position="1"/>
        <end position="379"/>
    </location>
</feature>
<feature type="transmembrane region" description="Helical" evidence="2">
    <location>
        <begin position="33"/>
        <end position="53"/>
    </location>
</feature>
<feature type="transmembrane region" description="Helical" evidence="2">
    <location>
        <begin position="77"/>
        <end position="98"/>
    </location>
</feature>
<feature type="transmembrane region" description="Helical" evidence="2">
    <location>
        <begin position="113"/>
        <end position="133"/>
    </location>
</feature>
<feature type="transmembrane region" description="Helical" evidence="2">
    <location>
        <begin position="178"/>
        <end position="198"/>
    </location>
</feature>
<feature type="transmembrane region" description="Helical" evidence="2">
    <location>
        <begin position="226"/>
        <end position="246"/>
    </location>
</feature>
<feature type="transmembrane region" description="Helical" evidence="2">
    <location>
        <begin position="288"/>
        <end position="308"/>
    </location>
</feature>
<feature type="transmembrane region" description="Helical" evidence="2">
    <location>
        <begin position="320"/>
        <end position="340"/>
    </location>
</feature>
<feature type="transmembrane region" description="Helical" evidence="2">
    <location>
        <begin position="347"/>
        <end position="367"/>
    </location>
</feature>
<feature type="binding site" description="axial binding residue" evidence="2">
    <location>
        <position position="83"/>
    </location>
    <ligand>
        <name>heme b</name>
        <dbReference type="ChEBI" id="CHEBI:60344"/>
        <label>b562</label>
    </ligand>
    <ligandPart>
        <name>Fe</name>
        <dbReference type="ChEBI" id="CHEBI:18248"/>
    </ligandPart>
</feature>
<feature type="binding site" description="axial binding residue" evidence="2">
    <location>
        <position position="97"/>
    </location>
    <ligand>
        <name>heme b</name>
        <dbReference type="ChEBI" id="CHEBI:60344"/>
        <label>b566</label>
    </ligand>
    <ligandPart>
        <name>Fe</name>
        <dbReference type="ChEBI" id="CHEBI:18248"/>
    </ligandPart>
</feature>
<feature type="binding site" description="axial binding residue" evidence="2">
    <location>
        <position position="182"/>
    </location>
    <ligand>
        <name>heme b</name>
        <dbReference type="ChEBI" id="CHEBI:60344"/>
        <label>b562</label>
    </ligand>
    <ligandPart>
        <name>Fe</name>
        <dbReference type="ChEBI" id="CHEBI:18248"/>
    </ligandPart>
</feature>
<feature type="binding site" description="axial binding residue" evidence="2">
    <location>
        <position position="196"/>
    </location>
    <ligand>
        <name>heme b</name>
        <dbReference type="ChEBI" id="CHEBI:60344"/>
        <label>b566</label>
    </ligand>
    <ligandPart>
        <name>Fe</name>
        <dbReference type="ChEBI" id="CHEBI:18248"/>
    </ligandPart>
</feature>
<feature type="binding site" evidence="2">
    <location>
        <position position="201"/>
    </location>
    <ligand>
        <name>a ubiquinone</name>
        <dbReference type="ChEBI" id="CHEBI:16389"/>
    </ligand>
</feature>
<feature type="sequence variant" description="In strain: Isolate #5800.">
    <original>I</original>
    <variation>V</variation>
    <location>
        <position position="39"/>
    </location>
</feature>
<gene>
    <name type="primary">MT-CYB</name>
    <name type="synonym">COB</name>
    <name type="synonym">CYTB</name>
    <name type="synonym">MTCYB</name>
</gene>
<dbReference type="EMBL" id="D85368">
    <property type="protein sequence ID" value="BAA21361.1"/>
    <property type="molecule type" value="Genomic_DNA"/>
</dbReference>
<dbReference type="EMBL" id="D85369">
    <property type="protein sequence ID" value="BAA21362.1"/>
    <property type="molecule type" value="Genomic_DNA"/>
</dbReference>
<dbReference type="EMBL" id="AJ000435">
    <property type="protein sequence ID" value="CAA04079.1"/>
    <property type="molecule type" value="Genomic_DNA"/>
</dbReference>
<dbReference type="SMR" id="O79463"/>
<dbReference type="GO" id="GO:0005743">
    <property type="term" value="C:mitochondrial inner membrane"/>
    <property type="evidence" value="ECO:0007669"/>
    <property type="project" value="UniProtKB-SubCell"/>
</dbReference>
<dbReference type="GO" id="GO:0045275">
    <property type="term" value="C:respiratory chain complex III"/>
    <property type="evidence" value="ECO:0007669"/>
    <property type="project" value="InterPro"/>
</dbReference>
<dbReference type="GO" id="GO:0046872">
    <property type="term" value="F:metal ion binding"/>
    <property type="evidence" value="ECO:0007669"/>
    <property type="project" value="UniProtKB-KW"/>
</dbReference>
<dbReference type="GO" id="GO:0008121">
    <property type="term" value="F:ubiquinol-cytochrome-c reductase activity"/>
    <property type="evidence" value="ECO:0007669"/>
    <property type="project" value="InterPro"/>
</dbReference>
<dbReference type="GO" id="GO:0006122">
    <property type="term" value="P:mitochondrial electron transport, ubiquinol to cytochrome c"/>
    <property type="evidence" value="ECO:0007669"/>
    <property type="project" value="TreeGrafter"/>
</dbReference>
<dbReference type="CDD" id="cd00290">
    <property type="entry name" value="cytochrome_b_C"/>
    <property type="match status" value="1"/>
</dbReference>
<dbReference type="CDD" id="cd00284">
    <property type="entry name" value="Cytochrome_b_N"/>
    <property type="match status" value="1"/>
</dbReference>
<dbReference type="FunFam" id="1.20.810.10:FF:000002">
    <property type="entry name" value="Cytochrome b"/>
    <property type="match status" value="1"/>
</dbReference>
<dbReference type="Gene3D" id="1.20.810.10">
    <property type="entry name" value="Cytochrome Bc1 Complex, Chain C"/>
    <property type="match status" value="1"/>
</dbReference>
<dbReference type="InterPro" id="IPR005798">
    <property type="entry name" value="Cyt_b/b6_C"/>
</dbReference>
<dbReference type="InterPro" id="IPR036150">
    <property type="entry name" value="Cyt_b/b6_C_sf"/>
</dbReference>
<dbReference type="InterPro" id="IPR005797">
    <property type="entry name" value="Cyt_b/b6_N"/>
</dbReference>
<dbReference type="InterPro" id="IPR027387">
    <property type="entry name" value="Cytb/b6-like_sf"/>
</dbReference>
<dbReference type="InterPro" id="IPR030689">
    <property type="entry name" value="Cytochrome_b"/>
</dbReference>
<dbReference type="InterPro" id="IPR048260">
    <property type="entry name" value="Cytochrome_b_C_euk/bac"/>
</dbReference>
<dbReference type="InterPro" id="IPR048259">
    <property type="entry name" value="Cytochrome_b_N_euk/bac"/>
</dbReference>
<dbReference type="InterPro" id="IPR016174">
    <property type="entry name" value="Di-haem_cyt_TM"/>
</dbReference>
<dbReference type="PANTHER" id="PTHR19271">
    <property type="entry name" value="CYTOCHROME B"/>
    <property type="match status" value="1"/>
</dbReference>
<dbReference type="PANTHER" id="PTHR19271:SF16">
    <property type="entry name" value="CYTOCHROME B"/>
    <property type="match status" value="1"/>
</dbReference>
<dbReference type="Pfam" id="PF00032">
    <property type="entry name" value="Cytochrom_B_C"/>
    <property type="match status" value="1"/>
</dbReference>
<dbReference type="Pfam" id="PF00033">
    <property type="entry name" value="Cytochrome_B"/>
    <property type="match status" value="1"/>
</dbReference>
<dbReference type="PIRSF" id="PIRSF038885">
    <property type="entry name" value="COB"/>
    <property type="match status" value="1"/>
</dbReference>
<dbReference type="SUPFAM" id="SSF81648">
    <property type="entry name" value="a domain/subunit of cytochrome bc1 complex (Ubiquinol-cytochrome c reductase)"/>
    <property type="match status" value="1"/>
</dbReference>
<dbReference type="SUPFAM" id="SSF81342">
    <property type="entry name" value="Transmembrane di-heme cytochromes"/>
    <property type="match status" value="1"/>
</dbReference>
<dbReference type="PROSITE" id="PS51003">
    <property type="entry name" value="CYTB_CTER"/>
    <property type="match status" value="1"/>
</dbReference>
<dbReference type="PROSITE" id="PS51002">
    <property type="entry name" value="CYTB_NTER"/>
    <property type="match status" value="1"/>
</dbReference>
<name>CYB_SORSH</name>
<geneLocation type="mitochondrion"/>
<sequence>MTNLRKTHPLMKIINSSFIDLPAPSNISSWWNFGSLLGICLIIQILTGLFLAMHYTSDTMTAFSSVTHICRDVNYGWLIRYLHANGASMFFICLFLHVGRGLYYGSYMYLETWNIGVLLLFAVMATAFMGYVLPWGQMSFWGATVITNLLSAIPYIGSDLVEWIWGGFSVDKATLTRFFAFHFILPFIIAALAGVHLLFLHETGSNNPSGLCSDADKIPFHPYYTIKDILGVLLLILVLTSLVLFSPDLLGDPDNYTLANPLNTPPHIKPEWYFLFAYAILRSIPNKLGGVLALVLSILVLAVVPFLHTSKQRSMMFRPFSQCLFWILVADLLTLTWIGGQPVEHPFIIIGQLASILYFLLILVIMPITSLFENNLLKW</sequence>
<accession>O79463</accession>
<accession>O21426</accession>
<accession>O21427</accession>
<evidence type="ECO:0000250" key="1"/>
<evidence type="ECO:0000250" key="2">
    <source>
        <dbReference type="UniProtKB" id="P00157"/>
    </source>
</evidence>
<evidence type="ECO:0000255" key="3">
    <source>
        <dbReference type="PROSITE-ProRule" id="PRU00967"/>
    </source>
</evidence>
<evidence type="ECO:0000255" key="4">
    <source>
        <dbReference type="PROSITE-ProRule" id="PRU00968"/>
    </source>
</evidence>